<organism>
    <name type="scientific">Phytoplasma mali (strain AT)</name>
    <dbReference type="NCBI Taxonomy" id="482235"/>
    <lineage>
        <taxon>Bacteria</taxon>
        <taxon>Bacillati</taxon>
        <taxon>Mycoplasmatota</taxon>
        <taxon>Mollicutes</taxon>
        <taxon>Acholeplasmatales</taxon>
        <taxon>Acholeplasmataceae</taxon>
        <taxon>Candidatus Phytoplasma</taxon>
        <taxon>16SrX (Apple proliferation group)</taxon>
    </lineage>
</organism>
<feature type="chain" id="PRO_1000123021" description="Elongation factor P">
    <location>
        <begin position="1"/>
        <end position="188"/>
    </location>
</feature>
<evidence type="ECO:0000255" key="1">
    <source>
        <dbReference type="HAMAP-Rule" id="MF_00141"/>
    </source>
</evidence>
<sequence length="188" mass="21717">MISTNDFKTGQTIKFNNNLFQIVSFLHVKPGKGAAFVRCKLKNLRTGSIIDNTFNSGIKVELAFINKNKIQFLYIDGNKYIFINIANYEQIEIEKQKIKNKIKYLYEGIIVDVVIYNDYEILDINLPEKLNLTVTKTEFIEKKDVKTNYYKDATLETGLVIKVPLFIQQGEKIIVNTQTGLYVSRCNK</sequence>
<accession>B3R0E7</accession>
<dbReference type="EMBL" id="CU469464">
    <property type="protein sequence ID" value="CAP18311.1"/>
    <property type="molecule type" value="Genomic_DNA"/>
</dbReference>
<dbReference type="SMR" id="B3R0E7"/>
<dbReference type="STRING" id="37692.ATP_00124"/>
<dbReference type="KEGG" id="pml:ATP_00124"/>
<dbReference type="eggNOG" id="COG0231">
    <property type="taxonomic scope" value="Bacteria"/>
</dbReference>
<dbReference type="HOGENOM" id="CLU_074944_0_1_14"/>
<dbReference type="UniPathway" id="UPA00345"/>
<dbReference type="Proteomes" id="UP000002020">
    <property type="component" value="Chromosome"/>
</dbReference>
<dbReference type="GO" id="GO:0005737">
    <property type="term" value="C:cytoplasm"/>
    <property type="evidence" value="ECO:0007669"/>
    <property type="project" value="UniProtKB-SubCell"/>
</dbReference>
<dbReference type="GO" id="GO:0003746">
    <property type="term" value="F:translation elongation factor activity"/>
    <property type="evidence" value="ECO:0007669"/>
    <property type="project" value="UniProtKB-UniRule"/>
</dbReference>
<dbReference type="GO" id="GO:0043043">
    <property type="term" value="P:peptide biosynthetic process"/>
    <property type="evidence" value="ECO:0007669"/>
    <property type="project" value="InterPro"/>
</dbReference>
<dbReference type="CDD" id="cd04470">
    <property type="entry name" value="S1_EF-P_repeat_1"/>
    <property type="match status" value="1"/>
</dbReference>
<dbReference type="CDD" id="cd05794">
    <property type="entry name" value="S1_EF-P_repeat_2"/>
    <property type="match status" value="1"/>
</dbReference>
<dbReference type="FunFam" id="2.30.30.30:FF:000003">
    <property type="entry name" value="Elongation factor P"/>
    <property type="match status" value="1"/>
</dbReference>
<dbReference type="FunFam" id="2.40.50.140:FF:000004">
    <property type="entry name" value="Elongation factor P"/>
    <property type="match status" value="1"/>
</dbReference>
<dbReference type="Gene3D" id="2.30.30.30">
    <property type="match status" value="1"/>
</dbReference>
<dbReference type="Gene3D" id="2.40.50.140">
    <property type="entry name" value="Nucleic acid-binding proteins"/>
    <property type="match status" value="2"/>
</dbReference>
<dbReference type="HAMAP" id="MF_00141">
    <property type="entry name" value="EF_P"/>
    <property type="match status" value="1"/>
</dbReference>
<dbReference type="InterPro" id="IPR015365">
    <property type="entry name" value="Elong-fact-P_C"/>
</dbReference>
<dbReference type="InterPro" id="IPR012340">
    <property type="entry name" value="NA-bd_OB-fold"/>
</dbReference>
<dbReference type="InterPro" id="IPR014722">
    <property type="entry name" value="Rib_uL2_dom2"/>
</dbReference>
<dbReference type="InterPro" id="IPR020599">
    <property type="entry name" value="Transl_elong_fac_P/YeiP"/>
</dbReference>
<dbReference type="InterPro" id="IPR013185">
    <property type="entry name" value="Transl_elong_KOW-like"/>
</dbReference>
<dbReference type="InterPro" id="IPR001059">
    <property type="entry name" value="Transl_elong_P/YeiP_cen"/>
</dbReference>
<dbReference type="InterPro" id="IPR013852">
    <property type="entry name" value="Transl_elong_P/YeiP_CS"/>
</dbReference>
<dbReference type="InterPro" id="IPR011768">
    <property type="entry name" value="Transl_elongation_fac_P"/>
</dbReference>
<dbReference type="InterPro" id="IPR008991">
    <property type="entry name" value="Translation_prot_SH3-like_sf"/>
</dbReference>
<dbReference type="NCBIfam" id="TIGR00038">
    <property type="entry name" value="efp"/>
    <property type="match status" value="1"/>
</dbReference>
<dbReference type="NCBIfam" id="NF001810">
    <property type="entry name" value="PRK00529.1"/>
    <property type="match status" value="1"/>
</dbReference>
<dbReference type="PANTHER" id="PTHR30053">
    <property type="entry name" value="ELONGATION FACTOR P"/>
    <property type="match status" value="1"/>
</dbReference>
<dbReference type="PANTHER" id="PTHR30053:SF12">
    <property type="entry name" value="ELONGATION FACTOR P (EF-P) FAMILY PROTEIN"/>
    <property type="match status" value="1"/>
</dbReference>
<dbReference type="Pfam" id="PF01132">
    <property type="entry name" value="EFP"/>
    <property type="match status" value="1"/>
</dbReference>
<dbReference type="Pfam" id="PF08207">
    <property type="entry name" value="EFP_N"/>
    <property type="match status" value="1"/>
</dbReference>
<dbReference type="Pfam" id="PF09285">
    <property type="entry name" value="Elong-fact-P_C"/>
    <property type="match status" value="1"/>
</dbReference>
<dbReference type="PIRSF" id="PIRSF005901">
    <property type="entry name" value="EF-P"/>
    <property type="match status" value="1"/>
</dbReference>
<dbReference type="SMART" id="SM01185">
    <property type="entry name" value="EFP"/>
    <property type="match status" value="1"/>
</dbReference>
<dbReference type="SMART" id="SM00841">
    <property type="entry name" value="Elong-fact-P_C"/>
    <property type="match status" value="1"/>
</dbReference>
<dbReference type="SUPFAM" id="SSF50249">
    <property type="entry name" value="Nucleic acid-binding proteins"/>
    <property type="match status" value="2"/>
</dbReference>
<dbReference type="SUPFAM" id="SSF50104">
    <property type="entry name" value="Translation proteins SH3-like domain"/>
    <property type="match status" value="1"/>
</dbReference>
<dbReference type="PROSITE" id="PS01275">
    <property type="entry name" value="EFP"/>
    <property type="match status" value="1"/>
</dbReference>
<comment type="function">
    <text evidence="1">Involved in peptide bond synthesis. Stimulates efficient translation and peptide-bond synthesis on native or reconstituted 70S ribosomes in vitro. Probably functions indirectly by altering the affinity of the ribosome for aminoacyl-tRNA, thus increasing their reactivity as acceptors for peptidyl transferase.</text>
</comment>
<comment type="pathway">
    <text evidence="1">Protein biosynthesis; polypeptide chain elongation.</text>
</comment>
<comment type="subcellular location">
    <subcellularLocation>
        <location evidence="1">Cytoplasm</location>
    </subcellularLocation>
</comment>
<comment type="similarity">
    <text evidence="1">Belongs to the elongation factor P family.</text>
</comment>
<protein>
    <recommendedName>
        <fullName evidence="1">Elongation factor P</fullName>
        <shortName evidence="1">EF-P</shortName>
    </recommendedName>
</protein>
<name>EFP_PHYMT</name>
<proteinExistence type="inferred from homology"/>
<keyword id="KW-0963">Cytoplasm</keyword>
<keyword id="KW-0251">Elongation factor</keyword>
<keyword id="KW-0648">Protein biosynthesis</keyword>
<keyword id="KW-1185">Reference proteome</keyword>
<reference key="1">
    <citation type="journal article" date="2008" name="BMC Genomics">
        <title>The linear chromosome of the plant-pathogenic mycoplasma 'Candidatus Phytoplasma mali'.</title>
        <authorList>
            <person name="Kube M."/>
            <person name="Schneider B."/>
            <person name="Kuhl H."/>
            <person name="Dandekar T."/>
            <person name="Heitmann K."/>
            <person name="Migdoll A.M."/>
            <person name="Reinhardt R."/>
            <person name="Seemueller E."/>
        </authorList>
    </citation>
    <scope>NUCLEOTIDE SEQUENCE [LARGE SCALE GENOMIC DNA]</scope>
    <source>
        <strain>AT</strain>
    </source>
</reference>
<gene>
    <name evidence="1" type="primary">efp</name>
    <name type="ordered locus">ATP_00124</name>
</gene>